<organism>
    <name type="scientific">Mesocricetus auratus</name>
    <name type="common">Golden hamster</name>
    <dbReference type="NCBI Taxonomy" id="10036"/>
    <lineage>
        <taxon>Eukaryota</taxon>
        <taxon>Metazoa</taxon>
        <taxon>Chordata</taxon>
        <taxon>Craniata</taxon>
        <taxon>Vertebrata</taxon>
        <taxon>Euteleostomi</taxon>
        <taxon>Mammalia</taxon>
        <taxon>Eutheria</taxon>
        <taxon>Euarchontoglires</taxon>
        <taxon>Glires</taxon>
        <taxon>Rodentia</taxon>
        <taxon>Myomorpha</taxon>
        <taxon>Muroidea</taxon>
        <taxon>Cricetidae</taxon>
        <taxon>Cricetinae</taxon>
        <taxon>Mesocricetus</taxon>
    </lineage>
</organism>
<comment type="function">
    <text evidence="1">Hydrolyzes bioactive fatty-acid esters of hydroxy-fatty acids (FAHFAs), but not other major classes of lipids (By similarity). Shows a preference for FAHFAs with branching distal from the carboxylate head group of the lipids (By similarity). Regulates the expression and the cell-associated anticoagulant activity of the inhibitor TFPI in endothelial cells (in vitro) (By similarity).</text>
</comment>
<comment type="catalytic activity">
    <reaction evidence="1">
        <text>9-hexadecanoyloxy-octadecanoate + H2O = 9-hydroxy-octadecanoate + hexadecanoate + H(+)</text>
        <dbReference type="Rhea" id="RHEA:52052"/>
        <dbReference type="ChEBI" id="CHEBI:7896"/>
        <dbReference type="ChEBI" id="CHEBI:15377"/>
        <dbReference type="ChEBI" id="CHEBI:15378"/>
        <dbReference type="ChEBI" id="CHEBI:83670"/>
        <dbReference type="ChEBI" id="CHEBI:136286"/>
    </reaction>
    <physiologicalReaction direction="left-to-right" evidence="1">
        <dbReference type="Rhea" id="RHEA:52053"/>
    </physiologicalReaction>
</comment>
<comment type="catalytic activity">
    <reaction evidence="1">
        <text>12-hexadecanoyloxy-octadecanoate + H2O = 12-hydroxyoctadecanoate + hexadecanoate + H(+)</text>
        <dbReference type="Rhea" id="RHEA:52056"/>
        <dbReference type="ChEBI" id="CHEBI:7896"/>
        <dbReference type="ChEBI" id="CHEBI:15377"/>
        <dbReference type="ChEBI" id="CHEBI:15378"/>
        <dbReference type="ChEBI" id="CHEBI:83677"/>
        <dbReference type="ChEBI" id="CHEBI:84201"/>
    </reaction>
    <physiologicalReaction direction="left-to-right" evidence="1">
        <dbReference type="Rhea" id="RHEA:52057"/>
    </physiologicalReaction>
</comment>
<comment type="catalytic activity">
    <reaction evidence="1">
        <text>9-(9Z-hexadecenoyloxy)-octadecanoate + H2O = (9Z)-hexadecenoate + 9-hydroxy-octadecanoate + H(+)</text>
        <dbReference type="Rhea" id="RHEA:52068"/>
        <dbReference type="ChEBI" id="CHEBI:15377"/>
        <dbReference type="ChEBI" id="CHEBI:15378"/>
        <dbReference type="ChEBI" id="CHEBI:32372"/>
        <dbReference type="ChEBI" id="CHEBI:136286"/>
        <dbReference type="ChEBI" id="CHEBI:136309"/>
    </reaction>
    <physiologicalReaction direction="left-to-right" evidence="1">
        <dbReference type="Rhea" id="RHEA:52069"/>
    </physiologicalReaction>
</comment>
<comment type="catalytic activity">
    <reaction evidence="1">
        <text>12-(9Z-hexadecenoyloxy)-octadecanoate + H2O = 12-hydroxyoctadecanoate + (9Z)-hexadecenoate + H(+)</text>
        <dbReference type="Rhea" id="RHEA:52072"/>
        <dbReference type="ChEBI" id="CHEBI:15377"/>
        <dbReference type="ChEBI" id="CHEBI:15378"/>
        <dbReference type="ChEBI" id="CHEBI:32372"/>
        <dbReference type="ChEBI" id="CHEBI:84201"/>
        <dbReference type="ChEBI" id="CHEBI:136312"/>
    </reaction>
    <physiologicalReaction direction="left-to-right" evidence="1">
        <dbReference type="Rhea" id="RHEA:52073"/>
    </physiologicalReaction>
</comment>
<comment type="catalytic activity">
    <reaction evidence="1">
        <text>13-(9Z-hexadecenoyloxy)-octadecanoate + H2O = 13-hydroxy-octadecanoate + (9Z)-hexadecenoate + H(+)</text>
        <dbReference type="Rhea" id="RHEA:52076"/>
        <dbReference type="ChEBI" id="CHEBI:15377"/>
        <dbReference type="ChEBI" id="CHEBI:15378"/>
        <dbReference type="ChEBI" id="CHEBI:32372"/>
        <dbReference type="ChEBI" id="CHEBI:136304"/>
        <dbReference type="ChEBI" id="CHEBI:136315"/>
    </reaction>
    <physiologicalReaction direction="left-to-right" evidence="1">
        <dbReference type="Rhea" id="RHEA:52077"/>
    </physiologicalReaction>
</comment>
<comment type="catalytic activity">
    <reaction evidence="1">
        <text>9-octadecanoyloxy-octadecanoate + H2O = 9-hydroxy-octadecanoate + octadecanoate + H(+)</text>
        <dbReference type="Rhea" id="RHEA:52096"/>
        <dbReference type="ChEBI" id="CHEBI:15377"/>
        <dbReference type="ChEBI" id="CHEBI:15378"/>
        <dbReference type="ChEBI" id="CHEBI:25629"/>
        <dbReference type="ChEBI" id="CHEBI:136286"/>
        <dbReference type="ChEBI" id="CHEBI:136373"/>
    </reaction>
    <physiologicalReaction direction="left-to-right" evidence="1">
        <dbReference type="Rhea" id="RHEA:52097"/>
    </physiologicalReaction>
</comment>
<comment type="catalytic activity">
    <reaction evidence="1">
        <text>12-octadecanoyloxy-octadecanoate + H2O = 12-hydroxyoctadecanoate + octadecanoate + H(+)</text>
        <dbReference type="Rhea" id="RHEA:52080"/>
        <dbReference type="ChEBI" id="CHEBI:15377"/>
        <dbReference type="ChEBI" id="CHEBI:15378"/>
        <dbReference type="ChEBI" id="CHEBI:25629"/>
        <dbReference type="ChEBI" id="CHEBI:84201"/>
        <dbReference type="ChEBI" id="CHEBI:136330"/>
    </reaction>
    <physiologicalReaction direction="left-to-right" evidence="1">
        <dbReference type="Rhea" id="RHEA:52081"/>
    </physiologicalReaction>
</comment>
<comment type="catalytic activity">
    <reaction evidence="1">
        <text>13-octadecanoyloxy-octadecanoate + H2O = 13-hydroxy-octadecanoate + octadecanoate + H(+)</text>
        <dbReference type="Rhea" id="RHEA:52084"/>
        <dbReference type="ChEBI" id="CHEBI:15377"/>
        <dbReference type="ChEBI" id="CHEBI:15378"/>
        <dbReference type="ChEBI" id="CHEBI:25629"/>
        <dbReference type="ChEBI" id="CHEBI:136304"/>
        <dbReference type="ChEBI" id="CHEBI:136335"/>
    </reaction>
    <physiologicalReaction direction="left-to-right" evidence="1">
        <dbReference type="Rhea" id="RHEA:52085"/>
    </physiologicalReaction>
</comment>
<comment type="catalytic activity">
    <reaction evidence="1">
        <text>9-(9Z-octadecenoyloxy)-octadecanoate + H2O = 9-hydroxy-octadecanoate + (9Z)-octadecenoate + H(+)</text>
        <dbReference type="Rhea" id="RHEA:52048"/>
        <dbReference type="ChEBI" id="CHEBI:15377"/>
        <dbReference type="ChEBI" id="CHEBI:15378"/>
        <dbReference type="ChEBI" id="CHEBI:30823"/>
        <dbReference type="ChEBI" id="CHEBI:136282"/>
        <dbReference type="ChEBI" id="CHEBI:136286"/>
    </reaction>
    <physiologicalReaction direction="left-to-right" evidence="1">
        <dbReference type="Rhea" id="RHEA:52049"/>
    </physiologicalReaction>
</comment>
<comment type="catalytic activity">
    <reaction evidence="1">
        <text>12-(9Z-octadecenoyloxy)-octadecanoate + H2O = 12-hydroxyoctadecanoate + (9Z)-octadecenoate + H(+)</text>
        <dbReference type="Rhea" id="RHEA:52060"/>
        <dbReference type="ChEBI" id="CHEBI:15377"/>
        <dbReference type="ChEBI" id="CHEBI:15378"/>
        <dbReference type="ChEBI" id="CHEBI:30823"/>
        <dbReference type="ChEBI" id="CHEBI:84201"/>
        <dbReference type="ChEBI" id="CHEBI:136302"/>
    </reaction>
    <physiologicalReaction direction="left-to-right" evidence="1">
        <dbReference type="Rhea" id="RHEA:52061"/>
    </physiologicalReaction>
</comment>
<comment type="catalytic activity">
    <reaction evidence="1">
        <text>13-(9Z-octadecenoyloxy)-octadecanoate + H2O = 13-hydroxy-octadecanoate + (9Z)-octadecenoate + H(+)</text>
        <dbReference type="Rhea" id="RHEA:52064"/>
        <dbReference type="ChEBI" id="CHEBI:15377"/>
        <dbReference type="ChEBI" id="CHEBI:15378"/>
        <dbReference type="ChEBI" id="CHEBI:30823"/>
        <dbReference type="ChEBI" id="CHEBI:136303"/>
        <dbReference type="ChEBI" id="CHEBI:136304"/>
    </reaction>
    <physiologicalReaction direction="left-to-right" evidence="1">
        <dbReference type="Rhea" id="RHEA:52065"/>
    </physiologicalReaction>
</comment>
<comment type="catalytic activity">
    <reaction evidence="1">
        <text>5-(9Z-octadecenoyloxy)-octadecanoate + H2O = 5-hydroxy-octadecanoate + (9Z)-octadecenoate + H(+)</text>
        <dbReference type="Rhea" id="RHEA:52100"/>
        <dbReference type="ChEBI" id="CHEBI:15377"/>
        <dbReference type="ChEBI" id="CHEBI:15378"/>
        <dbReference type="ChEBI" id="CHEBI:30823"/>
        <dbReference type="ChEBI" id="CHEBI:136370"/>
        <dbReference type="ChEBI" id="CHEBI:136389"/>
    </reaction>
    <physiologicalReaction direction="left-to-right" evidence="1">
        <dbReference type="Rhea" id="RHEA:52101"/>
    </physiologicalReaction>
</comment>
<comment type="subcellular location">
    <subcellularLocation>
        <location evidence="1">Cell membrane</location>
        <topology evidence="2">Multi-pass membrane protein</topology>
    </subcellularLocation>
    <text evidence="1">Colocalized with TFPI and CAV1 in lipid rafts.</text>
</comment>
<comment type="tissue specificity">
    <text evidence="3">Highly expressed in flank organs and weakly in testis and earlobes.</text>
</comment>
<comment type="induction">
    <text evidence="3">Up-regulated by androgen.</text>
</comment>
<comment type="miscellaneous">
    <text>Expression was reduced after castration and reappeared after testosterone treatments.</text>
</comment>
<comment type="similarity">
    <text evidence="4">Belongs to the AIG1 family.</text>
</comment>
<keyword id="KW-1003">Cell membrane</keyword>
<keyword id="KW-0378">Hydrolase</keyword>
<keyword id="KW-0443">Lipid metabolism</keyword>
<keyword id="KW-0472">Membrane</keyword>
<keyword id="KW-1185">Reference proteome</keyword>
<keyword id="KW-0812">Transmembrane</keyword>
<keyword id="KW-1133">Transmembrane helix</keyword>
<evidence type="ECO:0000250" key="1">
    <source>
        <dbReference type="UniProtKB" id="Q96IZ2"/>
    </source>
</evidence>
<evidence type="ECO:0000255" key="2"/>
<evidence type="ECO:0000269" key="3">
    <source>
    </source>
</evidence>
<evidence type="ECO:0000305" key="4"/>
<reference key="1">
    <citation type="journal article" date="1991" name="J. Invest. Dermatol.">
        <title>Isolation and characterization of cDNA for an androgen-regulated mRNA in the flank organ of hamsters.</title>
        <authorList>
            <person name="Seki T."/>
            <person name="Ideta R."/>
            <person name="Shibuya M."/>
            <person name="Adachi K."/>
        </authorList>
    </citation>
    <scope>NUCLEOTIDE SEQUENCE [MRNA]</scope>
    <scope>INDUCTION</scope>
    <scope>TISSUE SPECIFICITY</scope>
    <source>
        <tissue>Flank organ</tissue>
    </source>
</reference>
<sequence length="231" mass="27216">MTRTTTCVYHFLVWNWYIFLNYYIPLIGKDDEKLKEFHDGGRSKYLTLLNLLLQAIFFGVACLDDVLKRIIGRKDIKFITSTRDLLFSTLVFPISTFIFLVFWTLFYYDRSLIYPKGLDDYFPAWLNHAMHTYILLFVLVETILRPHHYPSKKLGLALLGACNLAYITRVLWRYSQTGNWVYPVFASLNPLGIIIFFLVCYILNASIYLVGEKINHWKWGATVKPLMKKKK</sequence>
<protein>
    <recommendedName>
        <fullName>Androgen-dependent TFPI-regulating protein</fullName>
    </recommendedName>
    <alternativeName>
        <fullName>Androgen-dependent-expressed protein FAR-17a</fullName>
    </alternativeName>
    <alternativeName>
        <fullName evidence="1">Fatty acid esters of hydroxy fatty acids hydrolase ADTRP</fullName>
        <shortName evidence="1">FAHFA hydrolase ADTRP</shortName>
        <ecNumber evidence="1">3.1.-.-</ecNumber>
    </alternativeName>
</protein>
<feature type="chain" id="PRO_0000190101" description="Androgen-dependent TFPI-regulating protein">
    <location>
        <begin position="1"/>
        <end position="231"/>
    </location>
</feature>
<feature type="topological domain" description="Cytoplasmic" evidence="1">
    <location>
        <begin position="1"/>
        <end position="7"/>
    </location>
</feature>
<feature type="transmembrane region" description="Helical" evidence="2">
    <location>
        <begin position="8"/>
        <end position="28"/>
    </location>
</feature>
<feature type="topological domain" description="Extracellular" evidence="1">
    <location>
        <begin position="29"/>
        <end position="45"/>
    </location>
</feature>
<feature type="transmembrane region" description="Helical" evidence="2">
    <location>
        <begin position="46"/>
        <end position="66"/>
    </location>
</feature>
<feature type="topological domain" description="Cytoplasmic" evidence="1">
    <location>
        <begin position="67"/>
        <end position="85"/>
    </location>
</feature>
<feature type="transmembrane region" description="Helical" evidence="2">
    <location>
        <begin position="86"/>
        <end position="106"/>
    </location>
</feature>
<feature type="topological domain" description="Extracellular" evidence="1">
    <location>
        <begin position="107"/>
        <end position="123"/>
    </location>
</feature>
<feature type="transmembrane region" description="Helical" evidence="2">
    <location>
        <begin position="124"/>
        <end position="144"/>
    </location>
</feature>
<feature type="topological domain" description="Cytoplasmic" evidence="1">
    <location>
        <begin position="145"/>
        <end position="154"/>
    </location>
</feature>
<feature type="transmembrane region" description="Helical" evidence="2">
    <location>
        <begin position="155"/>
        <end position="172"/>
    </location>
</feature>
<feature type="topological domain" description="Extracellular" evidence="1">
    <location>
        <begin position="173"/>
        <end position="190"/>
    </location>
</feature>
<feature type="transmembrane region" description="Helical" evidence="2">
    <location>
        <begin position="191"/>
        <end position="211"/>
    </location>
</feature>
<feature type="topological domain" description="Cytoplasmic" evidence="1">
    <location>
        <begin position="212"/>
        <end position="231"/>
    </location>
</feature>
<feature type="site" description="Important for catalytic activity" evidence="1">
    <location>
        <position position="47"/>
    </location>
</feature>
<feature type="site" description="Important for catalytic activity" evidence="1">
    <location>
        <position position="131"/>
    </location>
</feature>
<name>ADTRP_MESAU</name>
<gene>
    <name type="primary">ADTRP</name>
</gene>
<dbReference type="EC" id="3.1.-.-" evidence="1"/>
<dbReference type="EMBL" id="M80427">
    <property type="protein sequence ID" value="AAA37058.1"/>
    <property type="molecule type" value="mRNA"/>
</dbReference>
<dbReference type="PIR" id="A54313">
    <property type="entry name" value="A54313"/>
</dbReference>
<dbReference type="RefSeq" id="NP_001297502.1">
    <property type="nucleotide sequence ID" value="NM_001310573.1"/>
</dbReference>
<dbReference type="RefSeq" id="XP_012966032.1">
    <property type="nucleotide sequence ID" value="XM_013110578.1"/>
</dbReference>
<dbReference type="SMR" id="Q60534"/>
<dbReference type="GeneID" id="106020812"/>
<dbReference type="KEGG" id="maua:106020812"/>
<dbReference type="CTD" id="84830"/>
<dbReference type="OrthoDB" id="1898221at2759"/>
<dbReference type="Proteomes" id="UP000189706">
    <property type="component" value="Unplaced"/>
</dbReference>
<dbReference type="GO" id="GO:0012505">
    <property type="term" value="C:endomembrane system"/>
    <property type="evidence" value="ECO:0007669"/>
    <property type="project" value="TreeGrafter"/>
</dbReference>
<dbReference type="GO" id="GO:0005886">
    <property type="term" value="C:plasma membrane"/>
    <property type="evidence" value="ECO:0007669"/>
    <property type="project" value="UniProtKB-SubCell"/>
</dbReference>
<dbReference type="GO" id="GO:0016787">
    <property type="term" value="F:hydrolase activity"/>
    <property type="evidence" value="ECO:0007669"/>
    <property type="project" value="UniProtKB-KW"/>
</dbReference>
<dbReference type="GO" id="GO:0006629">
    <property type="term" value="P:lipid metabolic process"/>
    <property type="evidence" value="ECO:0007669"/>
    <property type="project" value="UniProtKB-KW"/>
</dbReference>
<dbReference type="InterPro" id="IPR006838">
    <property type="entry name" value="ADTRP_AIG1"/>
</dbReference>
<dbReference type="PANTHER" id="PTHR10989:SF17">
    <property type="entry name" value="ANDROGEN-DEPENDENT TFPI-REGULATING PROTEIN"/>
    <property type="match status" value="1"/>
</dbReference>
<dbReference type="PANTHER" id="PTHR10989">
    <property type="entry name" value="ANDROGEN-INDUCED PROTEIN 1-RELATED"/>
    <property type="match status" value="1"/>
</dbReference>
<dbReference type="Pfam" id="PF04750">
    <property type="entry name" value="Far-17a_AIG1"/>
    <property type="match status" value="1"/>
</dbReference>
<proteinExistence type="evidence at transcript level"/>
<accession>Q60534</accession>